<gene>
    <name type="primary">yhdT</name>
    <name type="ordered locus">BSU09590</name>
</gene>
<feature type="chain" id="PRO_0000088371" description="UPF0053 protein YhdT">
    <location>
        <begin position="1"/>
        <end position="461"/>
    </location>
</feature>
<feature type="transmembrane region" description="Helical" evidence="1">
    <location>
        <begin position="8"/>
        <end position="28"/>
    </location>
</feature>
<feature type="transmembrane region" description="Helical" evidence="1">
    <location>
        <begin position="103"/>
        <end position="123"/>
    </location>
</feature>
<feature type="transmembrane region" description="Helical" evidence="1">
    <location>
        <begin position="137"/>
        <end position="157"/>
    </location>
</feature>
<feature type="domain" description="CNNM transmembrane" evidence="3">
    <location>
        <begin position="1"/>
        <end position="202"/>
    </location>
</feature>
<feature type="domain" description="CBS 1" evidence="2">
    <location>
        <begin position="221"/>
        <end position="280"/>
    </location>
</feature>
<feature type="domain" description="CBS 2" evidence="2">
    <location>
        <begin position="290"/>
        <end position="347"/>
    </location>
</feature>
<keyword id="KW-0129">CBS domain</keyword>
<keyword id="KW-1003">Cell membrane</keyword>
<keyword id="KW-0472">Membrane</keyword>
<keyword id="KW-1185">Reference proteome</keyword>
<keyword id="KW-0677">Repeat</keyword>
<keyword id="KW-0812">Transmembrane</keyword>
<keyword id="KW-1133">Transmembrane helix</keyword>
<proteinExistence type="inferred from homology"/>
<organism>
    <name type="scientific">Bacillus subtilis (strain 168)</name>
    <dbReference type="NCBI Taxonomy" id="224308"/>
    <lineage>
        <taxon>Bacteria</taxon>
        <taxon>Bacillati</taxon>
        <taxon>Bacillota</taxon>
        <taxon>Bacilli</taxon>
        <taxon>Bacillales</taxon>
        <taxon>Bacillaceae</taxon>
        <taxon>Bacillus</taxon>
    </lineage>
</organism>
<dbReference type="EMBL" id="Y14082">
    <property type="protein sequence ID" value="CAA74504.1"/>
    <property type="molecule type" value="Genomic_DNA"/>
</dbReference>
<dbReference type="EMBL" id="AL009126">
    <property type="protein sequence ID" value="CAB12798.1"/>
    <property type="molecule type" value="Genomic_DNA"/>
</dbReference>
<dbReference type="PIR" id="B69827">
    <property type="entry name" value="B69827"/>
</dbReference>
<dbReference type="RefSeq" id="NP_388840.1">
    <property type="nucleotide sequence ID" value="NC_000964.3"/>
</dbReference>
<dbReference type="RefSeq" id="WP_003245822.1">
    <property type="nucleotide sequence ID" value="NZ_OZ025638.1"/>
</dbReference>
<dbReference type="SMR" id="O07589"/>
<dbReference type="FunCoup" id="O07589">
    <property type="interactions" value="577"/>
</dbReference>
<dbReference type="STRING" id="224308.BSU09590"/>
<dbReference type="PaxDb" id="224308-BSU09590"/>
<dbReference type="DNASU" id="936275"/>
<dbReference type="EnsemblBacteria" id="CAB12798">
    <property type="protein sequence ID" value="CAB12798"/>
    <property type="gene ID" value="BSU_09590"/>
</dbReference>
<dbReference type="GeneID" id="936275"/>
<dbReference type="KEGG" id="bsu:BSU09590"/>
<dbReference type="PATRIC" id="fig|224308.179.peg.1032"/>
<dbReference type="eggNOG" id="COG1253">
    <property type="taxonomic scope" value="Bacteria"/>
</dbReference>
<dbReference type="InParanoid" id="O07589"/>
<dbReference type="OrthoDB" id="9798188at2"/>
<dbReference type="PhylomeDB" id="O07589"/>
<dbReference type="BioCyc" id="BSUB:BSU09590-MONOMER"/>
<dbReference type="Proteomes" id="UP000001570">
    <property type="component" value="Chromosome"/>
</dbReference>
<dbReference type="GO" id="GO:0005886">
    <property type="term" value="C:plasma membrane"/>
    <property type="evidence" value="ECO:0007669"/>
    <property type="project" value="UniProtKB-SubCell"/>
</dbReference>
<dbReference type="GO" id="GO:0050660">
    <property type="term" value="F:flavin adenine dinucleotide binding"/>
    <property type="evidence" value="ECO:0007669"/>
    <property type="project" value="InterPro"/>
</dbReference>
<dbReference type="CDD" id="cd04590">
    <property type="entry name" value="CBS_pair_CorC_HlyC_assoc"/>
    <property type="match status" value="1"/>
</dbReference>
<dbReference type="FunFam" id="3.10.580.10:FF:000002">
    <property type="entry name" value="Magnesium/cobalt efflux protein CorC"/>
    <property type="match status" value="1"/>
</dbReference>
<dbReference type="Gene3D" id="3.30.465.10">
    <property type="match status" value="1"/>
</dbReference>
<dbReference type="Gene3D" id="3.10.580.10">
    <property type="entry name" value="CBS-domain"/>
    <property type="match status" value="1"/>
</dbReference>
<dbReference type="InterPro" id="IPR000644">
    <property type="entry name" value="CBS_dom"/>
</dbReference>
<dbReference type="InterPro" id="IPR046342">
    <property type="entry name" value="CBS_dom_sf"/>
</dbReference>
<dbReference type="InterPro" id="IPR002550">
    <property type="entry name" value="CNNM"/>
</dbReference>
<dbReference type="InterPro" id="IPR036318">
    <property type="entry name" value="FAD-bd_PCMH-like_sf"/>
</dbReference>
<dbReference type="InterPro" id="IPR016169">
    <property type="entry name" value="FAD-bd_PCMH_sub2"/>
</dbReference>
<dbReference type="InterPro" id="IPR044751">
    <property type="entry name" value="Ion_transp-like_CBS"/>
</dbReference>
<dbReference type="InterPro" id="IPR005170">
    <property type="entry name" value="Transptr-assoc_dom"/>
</dbReference>
<dbReference type="InterPro" id="IPR051676">
    <property type="entry name" value="UPF0053_domain"/>
</dbReference>
<dbReference type="PANTHER" id="PTHR43099">
    <property type="entry name" value="UPF0053 PROTEIN YRKA"/>
    <property type="match status" value="1"/>
</dbReference>
<dbReference type="PANTHER" id="PTHR43099:SF2">
    <property type="entry name" value="UPF0053 PROTEIN YRKA"/>
    <property type="match status" value="1"/>
</dbReference>
<dbReference type="Pfam" id="PF00571">
    <property type="entry name" value="CBS"/>
    <property type="match status" value="2"/>
</dbReference>
<dbReference type="Pfam" id="PF01595">
    <property type="entry name" value="CNNM"/>
    <property type="match status" value="1"/>
</dbReference>
<dbReference type="Pfam" id="PF03471">
    <property type="entry name" value="CorC_HlyC"/>
    <property type="match status" value="1"/>
</dbReference>
<dbReference type="SMART" id="SM01091">
    <property type="entry name" value="CorC_HlyC"/>
    <property type="match status" value="1"/>
</dbReference>
<dbReference type="SUPFAM" id="SSF54631">
    <property type="entry name" value="CBS-domain pair"/>
    <property type="match status" value="1"/>
</dbReference>
<dbReference type="SUPFAM" id="SSF56176">
    <property type="entry name" value="FAD-binding/transporter-associated domain-like"/>
    <property type="match status" value="1"/>
</dbReference>
<dbReference type="PROSITE" id="PS51371">
    <property type="entry name" value="CBS"/>
    <property type="match status" value="2"/>
</dbReference>
<dbReference type="PROSITE" id="PS51846">
    <property type="entry name" value="CNNM"/>
    <property type="match status" value="1"/>
</dbReference>
<reference key="1">
    <citation type="journal article" date="1998" name="Microbiology">
        <title>The 172 kb prkA-addAB region from 83 degrees to 97 degrees of the Bacillus subtilis chromosome contains several dysfunctional genes, the glyB marker, many genes encoding transporter proteins, and the ubiquitous hit gene.</title>
        <authorList>
            <person name="Noback M.A."/>
            <person name="Holsappel S."/>
            <person name="Kiewiet R."/>
            <person name="Terpstra P."/>
            <person name="Wambutt R."/>
            <person name="Wedler H."/>
            <person name="Venema G."/>
            <person name="Bron S."/>
        </authorList>
    </citation>
    <scope>NUCLEOTIDE SEQUENCE [GENOMIC DNA]</scope>
    <source>
        <strain>168</strain>
    </source>
</reference>
<reference key="2">
    <citation type="journal article" date="1997" name="Nature">
        <title>The complete genome sequence of the Gram-positive bacterium Bacillus subtilis.</title>
        <authorList>
            <person name="Kunst F."/>
            <person name="Ogasawara N."/>
            <person name="Moszer I."/>
            <person name="Albertini A.M."/>
            <person name="Alloni G."/>
            <person name="Azevedo V."/>
            <person name="Bertero M.G."/>
            <person name="Bessieres P."/>
            <person name="Bolotin A."/>
            <person name="Borchert S."/>
            <person name="Borriss R."/>
            <person name="Boursier L."/>
            <person name="Brans A."/>
            <person name="Braun M."/>
            <person name="Brignell S.C."/>
            <person name="Bron S."/>
            <person name="Brouillet S."/>
            <person name="Bruschi C.V."/>
            <person name="Caldwell B."/>
            <person name="Capuano V."/>
            <person name="Carter N.M."/>
            <person name="Choi S.-K."/>
            <person name="Codani J.-J."/>
            <person name="Connerton I.F."/>
            <person name="Cummings N.J."/>
            <person name="Daniel R.A."/>
            <person name="Denizot F."/>
            <person name="Devine K.M."/>
            <person name="Duesterhoeft A."/>
            <person name="Ehrlich S.D."/>
            <person name="Emmerson P.T."/>
            <person name="Entian K.-D."/>
            <person name="Errington J."/>
            <person name="Fabret C."/>
            <person name="Ferrari E."/>
            <person name="Foulger D."/>
            <person name="Fritz C."/>
            <person name="Fujita M."/>
            <person name="Fujita Y."/>
            <person name="Fuma S."/>
            <person name="Galizzi A."/>
            <person name="Galleron N."/>
            <person name="Ghim S.-Y."/>
            <person name="Glaser P."/>
            <person name="Goffeau A."/>
            <person name="Golightly E.J."/>
            <person name="Grandi G."/>
            <person name="Guiseppi G."/>
            <person name="Guy B.J."/>
            <person name="Haga K."/>
            <person name="Haiech J."/>
            <person name="Harwood C.R."/>
            <person name="Henaut A."/>
            <person name="Hilbert H."/>
            <person name="Holsappel S."/>
            <person name="Hosono S."/>
            <person name="Hullo M.-F."/>
            <person name="Itaya M."/>
            <person name="Jones L.-M."/>
            <person name="Joris B."/>
            <person name="Karamata D."/>
            <person name="Kasahara Y."/>
            <person name="Klaerr-Blanchard M."/>
            <person name="Klein C."/>
            <person name="Kobayashi Y."/>
            <person name="Koetter P."/>
            <person name="Koningstein G."/>
            <person name="Krogh S."/>
            <person name="Kumano M."/>
            <person name="Kurita K."/>
            <person name="Lapidus A."/>
            <person name="Lardinois S."/>
            <person name="Lauber J."/>
            <person name="Lazarevic V."/>
            <person name="Lee S.-M."/>
            <person name="Levine A."/>
            <person name="Liu H."/>
            <person name="Masuda S."/>
            <person name="Mauel C."/>
            <person name="Medigue C."/>
            <person name="Medina N."/>
            <person name="Mellado R.P."/>
            <person name="Mizuno M."/>
            <person name="Moestl D."/>
            <person name="Nakai S."/>
            <person name="Noback M."/>
            <person name="Noone D."/>
            <person name="O'Reilly M."/>
            <person name="Ogawa K."/>
            <person name="Ogiwara A."/>
            <person name="Oudega B."/>
            <person name="Park S.-H."/>
            <person name="Parro V."/>
            <person name="Pohl T.M."/>
            <person name="Portetelle D."/>
            <person name="Porwollik S."/>
            <person name="Prescott A.M."/>
            <person name="Presecan E."/>
            <person name="Pujic P."/>
            <person name="Purnelle B."/>
            <person name="Rapoport G."/>
            <person name="Rey M."/>
            <person name="Reynolds S."/>
            <person name="Rieger M."/>
            <person name="Rivolta C."/>
            <person name="Rocha E."/>
            <person name="Roche B."/>
            <person name="Rose M."/>
            <person name="Sadaie Y."/>
            <person name="Sato T."/>
            <person name="Scanlan E."/>
            <person name="Schleich S."/>
            <person name="Schroeter R."/>
            <person name="Scoffone F."/>
            <person name="Sekiguchi J."/>
            <person name="Sekowska A."/>
            <person name="Seror S.J."/>
            <person name="Serror P."/>
            <person name="Shin B.-S."/>
            <person name="Soldo B."/>
            <person name="Sorokin A."/>
            <person name="Tacconi E."/>
            <person name="Takagi T."/>
            <person name="Takahashi H."/>
            <person name="Takemaru K."/>
            <person name="Takeuchi M."/>
            <person name="Tamakoshi A."/>
            <person name="Tanaka T."/>
            <person name="Terpstra P."/>
            <person name="Tognoni A."/>
            <person name="Tosato V."/>
            <person name="Uchiyama S."/>
            <person name="Vandenbol M."/>
            <person name="Vannier F."/>
            <person name="Vassarotti A."/>
            <person name="Viari A."/>
            <person name="Wambutt R."/>
            <person name="Wedler E."/>
            <person name="Wedler H."/>
            <person name="Weitzenegger T."/>
            <person name="Winters P."/>
            <person name="Wipat A."/>
            <person name="Yamamoto H."/>
            <person name="Yamane K."/>
            <person name="Yasumoto K."/>
            <person name="Yata K."/>
            <person name="Yoshida K."/>
            <person name="Yoshikawa H.-F."/>
            <person name="Zumstein E."/>
            <person name="Yoshikawa H."/>
            <person name="Danchin A."/>
        </authorList>
    </citation>
    <scope>NUCLEOTIDE SEQUENCE [LARGE SCALE GENOMIC DNA]</scope>
    <source>
        <strain>168</strain>
    </source>
</reference>
<protein>
    <recommendedName>
        <fullName>UPF0053 protein YhdT</fullName>
    </recommendedName>
</protein>
<evidence type="ECO:0000255" key="1"/>
<evidence type="ECO:0000255" key="2">
    <source>
        <dbReference type="PROSITE-ProRule" id="PRU00703"/>
    </source>
</evidence>
<evidence type="ECO:0000255" key="3">
    <source>
        <dbReference type="PROSITE-ProRule" id="PRU01193"/>
    </source>
</evidence>
<evidence type="ECO:0000305" key="4"/>
<sequence>MDDIDSLILIGVLIALTAFFVASEFAIVRVRRSRIDQLITEGNKRAILARRVITDLDEYLSASQLGITLTSIGLGVLGEPAFERLLHPLFEPLGLPDSVSHAVSFAVAYGLITFLHVVVGELAPKTVAIQKAEQLTLLIAGPLRLFYLLLFPFIWILNGSARLLCGMFGLKPASEHDGSHSEEELRMLLSESLKNGEINPSEYKYVNKIFEFDNRIAKEIMIPRKEMAAVSTEMTMAEMLEVMLKEKYTRWPVTDGDKDSVLGLVNTKHLFSDLLFMTEEERMKMTIHPYVRPVIEVIETIPVHDLLIKMQRERIHMAILSDEYGGTSGLVTTEDILEEIVGEIRDEFDEDEQPLIQKLGDGHYVMDGKVRIDQVNSLLGASIQEDVDTIGGLILKENIDIEAGESIRIGSYTIKVLKMDGRLIKQIDIKEEAGNTTGITAHHKLPLPEPVMLNSATLSEK</sequence>
<name>YHDT_BACSU</name>
<accession>O07589</accession>
<comment type="subcellular location">
    <subcellularLocation>
        <location evidence="4">Cell membrane</location>
        <topology evidence="4">Multi-pass membrane protein</topology>
    </subcellularLocation>
</comment>
<comment type="similarity">
    <text evidence="4">Belongs to the UPF0053 family.</text>
</comment>